<feature type="chain" id="PRO_0000182029" description="Probable phosphopantothenoylcysteine decarboxylase">
    <location>
        <begin position="1"/>
        <end position="179"/>
    </location>
</feature>
<feature type="active site" description="Proton donor" evidence="1">
    <location>
        <position position="157"/>
    </location>
</feature>
<feature type="binding site" evidence="1">
    <location>
        <position position="124"/>
    </location>
    <ligand>
        <name>substrate</name>
    </ligand>
</feature>
<feature type="sequence conflict" description="In Ref. 2; AAC44502." evidence="2" ref="2">
    <original>L</original>
    <variation>F</variation>
    <location>
        <position position="35"/>
    </location>
</feature>
<feature type="sequence conflict" description="In Ref. 2; AAC44502." evidence="2" ref="2">
    <original>A</original>
    <variation>P</variation>
    <location>
        <position position="85"/>
    </location>
</feature>
<feature type="sequence conflict" description="In Ref. 2; AAC44502." evidence="2" ref="2">
    <original>A</original>
    <variation>T</variation>
    <location>
        <position position="138"/>
    </location>
</feature>
<evidence type="ECO:0000250" key="1"/>
<evidence type="ECO:0000305" key="2"/>
<sequence>MTKKILLAVSGSIAAYKAADLSHQLTKLGYHVNVLMTNAAKQFIPPLTLQVLSKNPVYSNVMKEDDPQVINHIALAKQADLFLLAPASANTLAHLAHGFADNIVTSVALALPLEVPKFFAPAMNTKMYENPITQSNIALLKKFGYKEIQPKSSVLACGDVGSGALADLDTIIQKIEEQL</sequence>
<comment type="function">
    <text>Catalyzes the decarboxylation of 4'-phosphopantothenoylcysteine to 4'-phosphopantetheine.</text>
</comment>
<comment type="catalytic activity">
    <reaction>
        <text>N-[(R)-4-phosphopantothenoyl]-L-cysteine + H(+) = (R)-4'-phosphopantetheine + CO2</text>
        <dbReference type="Rhea" id="RHEA:16793"/>
        <dbReference type="ChEBI" id="CHEBI:15378"/>
        <dbReference type="ChEBI" id="CHEBI:16526"/>
        <dbReference type="ChEBI" id="CHEBI:59458"/>
        <dbReference type="ChEBI" id="CHEBI:61723"/>
        <dbReference type="EC" id="4.1.1.36"/>
    </reaction>
</comment>
<comment type="cofactor">
    <cofactor evidence="1">
        <name>FMN</name>
        <dbReference type="ChEBI" id="CHEBI:58210"/>
    </cofactor>
    <text evidence="1">Binds 1 FMN per subunit.</text>
</comment>
<comment type="pathway">
    <text>Cofactor biosynthesis; coenzyme A biosynthesis; CoA from (R)-pantothenate: step 3/5.</text>
</comment>
<comment type="similarity">
    <text evidence="2">Belongs to the HFCD (homooligomeric flavin containing Cys decarboxylase) superfamily.</text>
</comment>
<proteinExistence type="inferred from homology"/>
<keyword id="KW-0210">Decarboxylase</keyword>
<keyword id="KW-0285">Flavoprotein</keyword>
<keyword id="KW-0288">FMN</keyword>
<keyword id="KW-0456">Lyase</keyword>
<keyword id="KW-1185">Reference proteome</keyword>
<dbReference type="EC" id="4.1.1.36"/>
<dbReference type="EMBL" id="AE014133">
    <property type="protein sequence ID" value="AAN58773.1"/>
    <property type="molecule type" value="Genomic_DNA"/>
</dbReference>
<dbReference type="EMBL" id="U48885">
    <property type="protein sequence ID" value="AAC44502.1"/>
    <property type="molecule type" value="Genomic_DNA"/>
</dbReference>
<dbReference type="RefSeq" id="NP_721467.1">
    <property type="nucleotide sequence ID" value="NC_004350.2"/>
</dbReference>
<dbReference type="RefSeq" id="WP_002262265.1">
    <property type="nucleotide sequence ID" value="NC_004350.2"/>
</dbReference>
<dbReference type="SMR" id="Q54433"/>
<dbReference type="STRING" id="210007.SMU_1075"/>
<dbReference type="GeneID" id="93859428"/>
<dbReference type="KEGG" id="smu:SMU_1075"/>
<dbReference type="PATRIC" id="fig|210007.7.peg.962"/>
<dbReference type="eggNOG" id="COG0452">
    <property type="taxonomic scope" value="Bacteria"/>
</dbReference>
<dbReference type="HOGENOM" id="CLU_033319_2_0_9"/>
<dbReference type="OrthoDB" id="9802554at2"/>
<dbReference type="PhylomeDB" id="Q54433"/>
<dbReference type="UniPathway" id="UPA00241">
    <property type="reaction ID" value="UER00354"/>
</dbReference>
<dbReference type="Proteomes" id="UP000002512">
    <property type="component" value="Chromosome"/>
</dbReference>
<dbReference type="GO" id="GO:0071513">
    <property type="term" value="C:phosphopantothenoylcysteine decarboxylase complex"/>
    <property type="evidence" value="ECO:0007669"/>
    <property type="project" value="TreeGrafter"/>
</dbReference>
<dbReference type="GO" id="GO:0010181">
    <property type="term" value="F:FMN binding"/>
    <property type="evidence" value="ECO:0007669"/>
    <property type="project" value="TreeGrafter"/>
</dbReference>
<dbReference type="GO" id="GO:0004633">
    <property type="term" value="F:phosphopantothenoylcysteine decarboxylase activity"/>
    <property type="evidence" value="ECO:0007669"/>
    <property type="project" value="UniProtKB-EC"/>
</dbReference>
<dbReference type="GO" id="GO:0015937">
    <property type="term" value="P:coenzyme A biosynthetic process"/>
    <property type="evidence" value="ECO:0007669"/>
    <property type="project" value="UniProtKB-UniPathway"/>
</dbReference>
<dbReference type="Gene3D" id="3.40.50.1950">
    <property type="entry name" value="Flavin prenyltransferase-like"/>
    <property type="match status" value="1"/>
</dbReference>
<dbReference type="InterPro" id="IPR011847">
    <property type="entry name" value="CoaC_strep"/>
</dbReference>
<dbReference type="InterPro" id="IPR036551">
    <property type="entry name" value="Flavin_trans-like"/>
</dbReference>
<dbReference type="InterPro" id="IPR003382">
    <property type="entry name" value="Flavoprotein"/>
</dbReference>
<dbReference type="NCBIfam" id="TIGR02113">
    <property type="entry name" value="coaC_strep"/>
    <property type="match status" value="1"/>
</dbReference>
<dbReference type="PANTHER" id="PTHR14359">
    <property type="entry name" value="HOMO-OLIGOMERIC FLAVIN CONTAINING CYS DECARBOXYLASE FAMILY"/>
    <property type="match status" value="1"/>
</dbReference>
<dbReference type="PANTHER" id="PTHR14359:SF6">
    <property type="entry name" value="PHOSPHOPANTOTHENOYLCYSTEINE DECARBOXYLASE"/>
    <property type="match status" value="1"/>
</dbReference>
<dbReference type="Pfam" id="PF02441">
    <property type="entry name" value="Flavoprotein"/>
    <property type="match status" value="1"/>
</dbReference>
<dbReference type="SUPFAM" id="SSF52507">
    <property type="entry name" value="Homo-oligomeric flavin-containing Cys decarboxylases, HFCD"/>
    <property type="match status" value="1"/>
</dbReference>
<name>COAC_STRMU</name>
<organism>
    <name type="scientific">Streptococcus mutans serotype c (strain ATCC 700610 / UA159)</name>
    <dbReference type="NCBI Taxonomy" id="210007"/>
    <lineage>
        <taxon>Bacteria</taxon>
        <taxon>Bacillati</taxon>
        <taxon>Bacillota</taxon>
        <taxon>Bacilli</taxon>
        <taxon>Lactobacillales</taxon>
        <taxon>Streptococcaceae</taxon>
        <taxon>Streptococcus</taxon>
    </lineage>
</organism>
<accession>Q54433</accession>
<gene>
    <name type="primary">coaC</name>
    <name type="ordered locus">SMU_1075</name>
</gene>
<protein>
    <recommendedName>
        <fullName>Probable phosphopantothenoylcysteine decarboxylase</fullName>
        <shortName>PPCDC</shortName>
        <ecNumber>4.1.1.36</ecNumber>
    </recommendedName>
</protein>
<reference key="1">
    <citation type="journal article" date="2002" name="Proc. Natl. Acad. Sci. U.S.A.">
        <title>Genome sequence of Streptococcus mutans UA159, a cariogenic dental pathogen.</title>
        <authorList>
            <person name="Ajdic D.J."/>
            <person name="McShan W.M."/>
            <person name="McLaughlin R.E."/>
            <person name="Savic G."/>
            <person name="Chang J."/>
            <person name="Carson M.B."/>
            <person name="Primeaux C."/>
            <person name="Tian R."/>
            <person name="Kenton S."/>
            <person name="Jia H.G."/>
            <person name="Lin S.P."/>
            <person name="Qian Y."/>
            <person name="Li S."/>
            <person name="Zhu H."/>
            <person name="Najar F.Z."/>
            <person name="Lai H."/>
            <person name="White J."/>
            <person name="Roe B.A."/>
            <person name="Ferretti J.J."/>
        </authorList>
    </citation>
    <scope>NUCLEOTIDE SEQUENCE [LARGE SCALE GENOMIC DNA]</scope>
    <source>
        <strain>ATCC 700610 / UA159</strain>
    </source>
</reference>
<reference key="2">
    <citation type="journal article" date="1996" name="J. Bacteriol.">
        <title>Insertional mutagenesis and recovery of interrupted genes of Streptococcus mutans by using transposon Tn917: preliminary characterization of mutants displaying acid sensitivity and nutritional requirements.</title>
        <authorList>
            <person name="Gutierrez J.A."/>
            <person name="Crowley P.J."/>
            <person name="Brown D.P."/>
            <person name="Hillman J.D."/>
            <person name="Youngman P."/>
            <person name="Bleiweis A.S."/>
        </authorList>
    </citation>
    <scope>NUCLEOTIDE SEQUENCE [GENOMIC DNA] OF 1-145</scope>
    <source>
        <strain>NG8</strain>
    </source>
</reference>